<feature type="chain" id="PRO_0000094162" description="Uncharacterized serpin-like protein MA_3388">
    <location>
        <begin position="1"/>
        <end position="424"/>
    </location>
</feature>
<feature type="site" description="Reactive bond" evidence="1">
    <location>
        <begin position="381"/>
        <end position="382"/>
    </location>
</feature>
<gene>
    <name type="ordered locus">MA_3388</name>
</gene>
<keyword id="KW-0646">Protease inhibitor</keyword>
<keyword id="KW-1185">Reference proteome</keyword>
<keyword id="KW-0722">Serine protease inhibitor</keyword>
<name>Y3388_METAC</name>
<accession>Q8TKL5</accession>
<organism>
    <name type="scientific">Methanosarcina acetivorans (strain ATCC 35395 / DSM 2834 / JCM 12185 / C2A)</name>
    <dbReference type="NCBI Taxonomy" id="188937"/>
    <lineage>
        <taxon>Archaea</taxon>
        <taxon>Methanobacteriati</taxon>
        <taxon>Methanobacteriota</taxon>
        <taxon>Stenosarchaea group</taxon>
        <taxon>Methanomicrobia</taxon>
        <taxon>Methanosarcinales</taxon>
        <taxon>Methanosarcinaceae</taxon>
        <taxon>Methanosarcina</taxon>
    </lineage>
</organism>
<evidence type="ECO:0000255" key="1"/>
<evidence type="ECO:0000305" key="2"/>
<reference key="1">
    <citation type="journal article" date="2002" name="Genome Res.">
        <title>The genome of Methanosarcina acetivorans reveals extensive metabolic and physiological diversity.</title>
        <authorList>
            <person name="Galagan J.E."/>
            <person name="Nusbaum C."/>
            <person name="Roy A."/>
            <person name="Endrizzi M.G."/>
            <person name="Macdonald P."/>
            <person name="FitzHugh W."/>
            <person name="Calvo S."/>
            <person name="Engels R."/>
            <person name="Smirnov S."/>
            <person name="Atnoor D."/>
            <person name="Brown A."/>
            <person name="Allen N."/>
            <person name="Naylor J."/>
            <person name="Stange-Thomann N."/>
            <person name="DeArellano K."/>
            <person name="Johnson R."/>
            <person name="Linton L."/>
            <person name="McEwan P."/>
            <person name="McKernan K."/>
            <person name="Talamas J."/>
            <person name="Tirrell A."/>
            <person name="Ye W."/>
            <person name="Zimmer A."/>
            <person name="Barber R.D."/>
            <person name="Cann I."/>
            <person name="Graham D.E."/>
            <person name="Grahame D.A."/>
            <person name="Guss A.M."/>
            <person name="Hedderich R."/>
            <person name="Ingram-Smith C."/>
            <person name="Kuettner H.C."/>
            <person name="Krzycki J.A."/>
            <person name="Leigh J.A."/>
            <person name="Li W."/>
            <person name="Liu J."/>
            <person name="Mukhopadhyay B."/>
            <person name="Reeve J.N."/>
            <person name="Smith K."/>
            <person name="Springer T.A."/>
            <person name="Umayam L.A."/>
            <person name="White O."/>
            <person name="White R.H."/>
            <person name="de Macario E.C."/>
            <person name="Ferry J.G."/>
            <person name="Jarrell K.F."/>
            <person name="Jing H."/>
            <person name="Macario A.J.L."/>
            <person name="Paulsen I.T."/>
            <person name="Pritchett M."/>
            <person name="Sowers K.R."/>
            <person name="Swanson R.V."/>
            <person name="Zinder S.H."/>
            <person name="Lander E."/>
            <person name="Metcalf W.W."/>
            <person name="Birren B."/>
        </authorList>
    </citation>
    <scope>NUCLEOTIDE SEQUENCE [LARGE SCALE GENOMIC DNA]</scope>
    <source>
        <strain>ATCC 35395 / DSM 2834 / JCM 12185 / C2A</strain>
    </source>
</reference>
<protein>
    <recommendedName>
        <fullName>Uncharacterized serpin-like protein MA_3388</fullName>
    </recommendedName>
</protein>
<proteinExistence type="inferred from homology"/>
<sequence>MNKIKIAFLVFSLILLCTGCIEDKAVVEKNTAVFEESTINADSVSDYDIAAANNAFAFDMYSQLARRETGDHENVFFSPHSISASMAICYEGAEDTTKEQISNVFYFPSNKTVLKVRMERINDKINSVNSDYELQTANALWVQEGYPVKETYIHNVQKYYDGEVTNLDFAGKPDASRDTINEWVEARTNDKIKDLVPEDAITADARLIITNAVYFNGKWMYEFDKEMTGKKSFYPTKEEDISVDMMYTCNRFNYGETSKAKIIELPYRGNDLSMYVVLPKSNNIEKFETEFTLNDYTELKNDMEVVEEVKTTIPKFKFETKTELSNSLIEMGVVDAFGQADFSGISDSPLEISRVIHQAFIDVKEEGTEAAAATMEEMAMGVSISWDAKPKEFTADHPFMFFIEDGRTNCILFMGKVEYPEYEE</sequence>
<dbReference type="EMBL" id="AE010299">
    <property type="protein sequence ID" value="AAM06757.1"/>
    <property type="molecule type" value="Genomic_DNA"/>
</dbReference>
<dbReference type="RefSeq" id="WP_011023315.1">
    <property type="nucleotide sequence ID" value="NC_003552.1"/>
</dbReference>
<dbReference type="SMR" id="Q8TKL5"/>
<dbReference type="STRING" id="188937.MA_3388"/>
<dbReference type="MEROPS" id="I04.089"/>
<dbReference type="EnsemblBacteria" id="AAM06757">
    <property type="protein sequence ID" value="AAM06757"/>
    <property type="gene ID" value="MA_3388"/>
</dbReference>
<dbReference type="GeneID" id="1475281"/>
<dbReference type="KEGG" id="mac:MA_3388"/>
<dbReference type="HOGENOM" id="CLU_023330_0_2_2"/>
<dbReference type="InParanoid" id="Q8TKL5"/>
<dbReference type="OrthoDB" id="371710at2157"/>
<dbReference type="PhylomeDB" id="Q8TKL5"/>
<dbReference type="Proteomes" id="UP000002487">
    <property type="component" value="Chromosome"/>
</dbReference>
<dbReference type="GO" id="GO:0005615">
    <property type="term" value="C:extracellular space"/>
    <property type="evidence" value="ECO:0000318"/>
    <property type="project" value="GO_Central"/>
</dbReference>
<dbReference type="GO" id="GO:0004867">
    <property type="term" value="F:serine-type endopeptidase inhibitor activity"/>
    <property type="evidence" value="ECO:0007669"/>
    <property type="project" value="UniProtKB-KW"/>
</dbReference>
<dbReference type="CDD" id="cd19591">
    <property type="entry name" value="serpin_like"/>
    <property type="match status" value="1"/>
</dbReference>
<dbReference type="Gene3D" id="2.30.39.10">
    <property type="entry name" value="Alpha-1-antitrypsin, domain 1"/>
    <property type="match status" value="1"/>
</dbReference>
<dbReference type="Gene3D" id="3.30.497.10">
    <property type="entry name" value="Antithrombin, subunit I, domain 2"/>
    <property type="match status" value="1"/>
</dbReference>
<dbReference type="InterPro" id="IPR023795">
    <property type="entry name" value="Serpin_CS"/>
</dbReference>
<dbReference type="InterPro" id="IPR023796">
    <property type="entry name" value="Serpin_dom"/>
</dbReference>
<dbReference type="InterPro" id="IPR000215">
    <property type="entry name" value="Serpin_fam"/>
</dbReference>
<dbReference type="InterPro" id="IPR036186">
    <property type="entry name" value="Serpin_sf"/>
</dbReference>
<dbReference type="InterPro" id="IPR042178">
    <property type="entry name" value="Serpin_sf_1"/>
</dbReference>
<dbReference type="InterPro" id="IPR042185">
    <property type="entry name" value="Serpin_sf_2"/>
</dbReference>
<dbReference type="PANTHER" id="PTHR11461:SF211">
    <property type="entry name" value="GH10112P-RELATED"/>
    <property type="match status" value="1"/>
</dbReference>
<dbReference type="PANTHER" id="PTHR11461">
    <property type="entry name" value="SERINE PROTEASE INHIBITOR, SERPIN"/>
    <property type="match status" value="1"/>
</dbReference>
<dbReference type="Pfam" id="PF00079">
    <property type="entry name" value="Serpin"/>
    <property type="match status" value="1"/>
</dbReference>
<dbReference type="SMART" id="SM00093">
    <property type="entry name" value="SERPIN"/>
    <property type="match status" value="1"/>
</dbReference>
<dbReference type="SUPFAM" id="SSF56574">
    <property type="entry name" value="Serpins"/>
    <property type="match status" value="1"/>
</dbReference>
<dbReference type="PROSITE" id="PS00284">
    <property type="entry name" value="SERPIN"/>
    <property type="match status" value="1"/>
</dbReference>
<comment type="similarity">
    <text evidence="2">Belongs to the serpin family.</text>
</comment>